<name>YIDC_NEIG2</name>
<evidence type="ECO:0000255" key="1">
    <source>
        <dbReference type="HAMAP-Rule" id="MF_01810"/>
    </source>
</evidence>
<dbReference type="EMBL" id="CP001050">
    <property type="protein sequence ID" value="ACF31257.1"/>
    <property type="molecule type" value="Genomic_DNA"/>
</dbReference>
<dbReference type="RefSeq" id="WP_003697918.1">
    <property type="nucleotide sequence ID" value="NC_011035.1"/>
</dbReference>
<dbReference type="SMR" id="B4RJJ2"/>
<dbReference type="GeneID" id="66754506"/>
<dbReference type="KEGG" id="ngk:NGK_2658"/>
<dbReference type="HOGENOM" id="CLU_016535_3_0_4"/>
<dbReference type="Proteomes" id="UP000002564">
    <property type="component" value="Chromosome"/>
</dbReference>
<dbReference type="GO" id="GO:0005886">
    <property type="term" value="C:plasma membrane"/>
    <property type="evidence" value="ECO:0007669"/>
    <property type="project" value="UniProtKB-SubCell"/>
</dbReference>
<dbReference type="GO" id="GO:0032977">
    <property type="term" value="F:membrane insertase activity"/>
    <property type="evidence" value="ECO:0007669"/>
    <property type="project" value="InterPro"/>
</dbReference>
<dbReference type="GO" id="GO:0051205">
    <property type="term" value="P:protein insertion into membrane"/>
    <property type="evidence" value="ECO:0007669"/>
    <property type="project" value="TreeGrafter"/>
</dbReference>
<dbReference type="GO" id="GO:0015031">
    <property type="term" value="P:protein transport"/>
    <property type="evidence" value="ECO:0007669"/>
    <property type="project" value="UniProtKB-KW"/>
</dbReference>
<dbReference type="CDD" id="cd20070">
    <property type="entry name" value="5TM_YidC_Alb3"/>
    <property type="match status" value="1"/>
</dbReference>
<dbReference type="CDD" id="cd19961">
    <property type="entry name" value="EcYidC-like_peri"/>
    <property type="match status" value="1"/>
</dbReference>
<dbReference type="FunFam" id="2.70.98.90:FF:000003">
    <property type="entry name" value="Membrane protein insertase YidC"/>
    <property type="match status" value="1"/>
</dbReference>
<dbReference type="Gene3D" id="2.70.98.90">
    <property type="match status" value="1"/>
</dbReference>
<dbReference type="HAMAP" id="MF_01810">
    <property type="entry name" value="YidC_type1"/>
    <property type="match status" value="1"/>
</dbReference>
<dbReference type="InterPro" id="IPR019998">
    <property type="entry name" value="Membr_insert_YidC"/>
</dbReference>
<dbReference type="InterPro" id="IPR028053">
    <property type="entry name" value="Membr_insert_YidC_N"/>
</dbReference>
<dbReference type="InterPro" id="IPR001708">
    <property type="entry name" value="YidC/ALB3/OXA1/COX18"/>
</dbReference>
<dbReference type="InterPro" id="IPR028055">
    <property type="entry name" value="YidC/Oxa/ALB_C"/>
</dbReference>
<dbReference type="InterPro" id="IPR047196">
    <property type="entry name" value="YidC_ALB_C"/>
</dbReference>
<dbReference type="InterPro" id="IPR038221">
    <property type="entry name" value="YidC_periplasmic_sf"/>
</dbReference>
<dbReference type="NCBIfam" id="NF002352">
    <property type="entry name" value="PRK01318.1-3"/>
    <property type="match status" value="1"/>
</dbReference>
<dbReference type="NCBIfam" id="TIGR03593">
    <property type="entry name" value="yidC_nterm"/>
    <property type="match status" value="1"/>
</dbReference>
<dbReference type="NCBIfam" id="TIGR03592">
    <property type="entry name" value="yidC_oxa1_cterm"/>
    <property type="match status" value="1"/>
</dbReference>
<dbReference type="PANTHER" id="PTHR12428:SF65">
    <property type="entry name" value="CYTOCHROME C OXIDASE ASSEMBLY PROTEIN COX18, MITOCHONDRIAL"/>
    <property type="match status" value="1"/>
</dbReference>
<dbReference type="PANTHER" id="PTHR12428">
    <property type="entry name" value="OXA1"/>
    <property type="match status" value="1"/>
</dbReference>
<dbReference type="Pfam" id="PF02096">
    <property type="entry name" value="60KD_IMP"/>
    <property type="match status" value="1"/>
</dbReference>
<dbReference type="Pfam" id="PF14849">
    <property type="entry name" value="YidC_periplas"/>
    <property type="match status" value="1"/>
</dbReference>
<dbReference type="PRINTS" id="PR00701">
    <property type="entry name" value="60KDINNERMP"/>
</dbReference>
<dbReference type="PRINTS" id="PR01900">
    <property type="entry name" value="YIDCPROTEIN"/>
</dbReference>
<feature type="chain" id="PRO_1000187683" description="Membrane protein insertase YidC">
    <location>
        <begin position="1"/>
        <end position="545"/>
    </location>
</feature>
<feature type="transmembrane region" description="Helical" evidence="1">
    <location>
        <begin position="350"/>
        <end position="370"/>
    </location>
</feature>
<feature type="transmembrane region" description="Helical" evidence="1">
    <location>
        <begin position="424"/>
        <end position="444"/>
    </location>
</feature>
<feature type="transmembrane region" description="Helical" evidence="1">
    <location>
        <begin position="461"/>
        <end position="481"/>
    </location>
</feature>
<feature type="transmembrane region" description="Helical" evidence="1">
    <location>
        <begin position="498"/>
        <end position="518"/>
    </location>
</feature>
<keyword id="KW-0997">Cell inner membrane</keyword>
<keyword id="KW-1003">Cell membrane</keyword>
<keyword id="KW-0143">Chaperone</keyword>
<keyword id="KW-0472">Membrane</keyword>
<keyword id="KW-0653">Protein transport</keyword>
<keyword id="KW-0812">Transmembrane</keyword>
<keyword id="KW-1133">Transmembrane helix</keyword>
<keyword id="KW-0813">Transport</keyword>
<protein>
    <recommendedName>
        <fullName evidence="1">Membrane protein insertase YidC</fullName>
    </recommendedName>
    <alternativeName>
        <fullName evidence="1">Foldase YidC</fullName>
    </alternativeName>
    <alternativeName>
        <fullName evidence="1">Membrane integrase YidC</fullName>
    </alternativeName>
    <alternativeName>
        <fullName evidence="1">Membrane protein YidC</fullName>
    </alternativeName>
</protein>
<reference key="1">
    <citation type="journal article" date="2008" name="J. Bacteriol.">
        <title>Complete genome sequence of Neisseria gonorrhoeae NCCP11945.</title>
        <authorList>
            <person name="Chung G.T."/>
            <person name="Yoo J.S."/>
            <person name="Oh H.B."/>
            <person name="Lee Y.S."/>
            <person name="Cha S.H."/>
            <person name="Kim S.J."/>
            <person name="Yoo C.K."/>
        </authorList>
    </citation>
    <scope>NUCLEOTIDE SEQUENCE [LARGE SCALE GENOMIC DNA]</scope>
    <source>
        <strain>NCCP11945</strain>
    </source>
</reference>
<sequence>MDFKRLTAFFAIALVIMIGWEKMFPTPKPVPAPQQAAQKQAATASAEAALAPATPITVTTDTVQAVIDEKSGDLRRLTLLKYKATGDENKPFVLFGDGKEYTYVAQSELLDAQGNNILKGIGFSAPKKQYTLNGDTVEVRLSAPETNGLKIDKVYTFTKDSYLVNVRFDIANGSGQTANLSADYRIVRDHSEPEGQGYFTHSYVGPVVYTPEGNFQKVSFSDLDDDAKSGKSEAEYIRKTPTGWLGMIEHHFMSTWILQPKGGQSVCAAGDCHIDIKRRSDKLYSASVSVPLAAIQAGAKAETAVNLYAGPQTTSVIANIADNLQLAKDYGKVHWFASPLFWLLNQLHNIIGNWGWAIVVLTIIVKAVLYPLTNASYRSMAKMRAAAPKLQTIKEKYGDDRMAQQQAMMQLYKDEKINPLGGCLPMLLQIPVFIGLYWALFASVELRQAPWLGWITDLSRADPYYILPIIMAATMFAQTYLNPPPTDPMQAKMMKIMPLVFSVMFFFFPAGLVLYWVVNNLLTIAQQWHINRSIEKQRAQGEVVS</sequence>
<proteinExistence type="inferred from homology"/>
<accession>B4RJJ2</accession>
<gene>
    <name evidence="1" type="primary">yidC</name>
    <name type="ordered locus">NGK_2658</name>
</gene>
<organism>
    <name type="scientific">Neisseria gonorrhoeae (strain NCCP11945)</name>
    <dbReference type="NCBI Taxonomy" id="521006"/>
    <lineage>
        <taxon>Bacteria</taxon>
        <taxon>Pseudomonadati</taxon>
        <taxon>Pseudomonadota</taxon>
        <taxon>Betaproteobacteria</taxon>
        <taxon>Neisseriales</taxon>
        <taxon>Neisseriaceae</taxon>
        <taxon>Neisseria</taxon>
    </lineage>
</organism>
<comment type="function">
    <text evidence="1">Required for the insertion and/or proper folding and/or complex formation of integral membrane proteins into the membrane. Involved in integration of membrane proteins that insert both dependently and independently of the Sec translocase complex, as well as at least some lipoproteins. Aids folding of multispanning membrane proteins.</text>
</comment>
<comment type="subunit">
    <text evidence="1">Interacts with the Sec translocase complex via SecD. Specifically interacts with transmembrane segments of nascent integral membrane proteins during membrane integration.</text>
</comment>
<comment type="subcellular location">
    <subcellularLocation>
        <location evidence="1">Cell inner membrane</location>
        <topology evidence="1">Multi-pass membrane protein</topology>
    </subcellularLocation>
</comment>
<comment type="similarity">
    <text evidence="1">Belongs to the OXA1/ALB3/YidC family. Type 1 subfamily.</text>
</comment>